<protein>
    <recommendedName>
        <fullName evidence="1">ATP-dependent Clp protease proteolytic subunit</fullName>
        <ecNumber evidence="1">3.4.21.92</ecNumber>
    </recommendedName>
    <alternativeName>
        <fullName evidence="1">Endopeptidase Clp</fullName>
    </alternativeName>
</protein>
<sequence>MASQAPRDFEAQALGLVPIVVETSGRGERSYDIYSRLLKERIVFMVGEVNDQTANLVVAQLLFLESENPDKDISLYINSPGGSVSAGMAIYDTMQFVKPDVSTLCMGLAASMGAFLLASGAKGKRYALPNARVMIHQPLGGARGQASDIEIQAREILYLRDRLNHLLAHHTGQDVERIARDTDRDNFMSSEDAKAYGLIDHVSTKRP</sequence>
<feature type="chain" id="PRO_0000179522" description="ATP-dependent Clp protease proteolytic subunit">
    <location>
        <begin position="1"/>
        <end position="207"/>
    </location>
</feature>
<feature type="active site" description="Nucleophile" evidence="1">
    <location>
        <position position="111"/>
    </location>
</feature>
<feature type="active site" evidence="1">
    <location>
        <position position="136"/>
    </location>
</feature>
<gene>
    <name evidence="1" type="primary">clpP</name>
    <name type="ordered locus">BMA1465</name>
</gene>
<organism>
    <name type="scientific">Burkholderia mallei (strain ATCC 23344)</name>
    <dbReference type="NCBI Taxonomy" id="243160"/>
    <lineage>
        <taxon>Bacteria</taxon>
        <taxon>Pseudomonadati</taxon>
        <taxon>Pseudomonadota</taxon>
        <taxon>Betaproteobacteria</taxon>
        <taxon>Burkholderiales</taxon>
        <taxon>Burkholderiaceae</taxon>
        <taxon>Burkholderia</taxon>
        <taxon>pseudomallei group</taxon>
    </lineage>
</organism>
<accession>Q62JK7</accession>
<dbReference type="EC" id="3.4.21.92" evidence="1"/>
<dbReference type="EMBL" id="CP000010">
    <property type="protein sequence ID" value="AAU47683.1"/>
    <property type="molecule type" value="Genomic_DNA"/>
</dbReference>
<dbReference type="RefSeq" id="YP_103112.1">
    <property type="nucleotide sequence ID" value="NC_006348.1"/>
</dbReference>
<dbReference type="SMR" id="Q62JK7"/>
<dbReference type="MEROPS" id="S14.001"/>
<dbReference type="KEGG" id="bma:BMA1465"/>
<dbReference type="PATRIC" id="fig|243160.12.peg.1505"/>
<dbReference type="eggNOG" id="COG0740">
    <property type="taxonomic scope" value="Bacteria"/>
</dbReference>
<dbReference type="HOGENOM" id="CLU_058707_3_2_4"/>
<dbReference type="Proteomes" id="UP000006693">
    <property type="component" value="Chromosome 1"/>
</dbReference>
<dbReference type="GO" id="GO:0005737">
    <property type="term" value="C:cytoplasm"/>
    <property type="evidence" value="ECO:0007669"/>
    <property type="project" value="UniProtKB-SubCell"/>
</dbReference>
<dbReference type="GO" id="GO:0009368">
    <property type="term" value="C:endopeptidase Clp complex"/>
    <property type="evidence" value="ECO:0007669"/>
    <property type="project" value="TreeGrafter"/>
</dbReference>
<dbReference type="GO" id="GO:0004176">
    <property type="term" value="F:ATP-dependent peptidase activity"/>
    <property type="evidence" value="ECO:0007669"/>
    <property type="project" value="InterPro"/>
</dbReference>
<dbReference type="GO" id="GO:0051117">
    <property type="term" value="F:ATPase binding"/>
    <property type="evidence" value="ECO:0007669"/>
    <property type="project" value="TreeGrafter"/>
</dbReference>
<dbReference type="GO" id="GO:0004252">
    <property type="term" value="F:serine-type endopeptidase activity"/>
    <property type="evidence" value="ECO:0007669"/>
    <property type="project" value="UniProtKB-UniRule"/>
</dbReference>
<dbReference type="GO" id="GO:0006515">
    <property type="term" value="P:protein quality control for misfolded or incompletely synthesized proteins"/>
    <property type="evidence" value="ECO:0007669"/>
    <property type="project" value="TreeGrafter"/>
</dbReference>
<dbReference type="CDD" id="cd07017">
    <property type="entry name" value="S14_ClpP_2"/>
    <property type="match status" value="1"/>
</dbReference>
<dbReference type="FunFam" id="3.90.226.10:FF:000001">
    <property type="entry name" value="ATP-dependent Clp protease proteolytic subunit"/>
    <property type="match status" value="1"/>
</dbReference>
<dbReference type="Gene3D" id="3.90.226.10">
    <property type="entry name" value="2-enoyl-CoA Hydratase, Chain A, domain 1"/>
    <property type="match status" value="1"/>
</dbReference>
<dbReference type="HAMAP" id="MF_00444">
    <property type="entry name" value="ClpP"/>
    <property type="match status" value="1"/>
</dbReference>
<dbReference type="InterPro" id="IPR001907">
    <property type="entry name" value="ClpP"/>
</dbReference>
<dbReference type="InterPro" id="IPR029045">
    <property type="entry name" value="ClpP/crotonase-like_dom_sf"/>
</dbReference>
<dbReference type="InterPro" id="IPR023562">
    <property type="entry name" value="ClpP/TepA"/>
</dbReference>
<dbReference type="InterPro" id="IPR033135">
    <property type="entry name" value="ClpP_His_AS"/>
</dbReference>
<dbReference type="InterPro" id="IPR018215">
    <property type="entry name" value="ClpP_Ser_AS"/>
</dbReference>
<dbReference type="NCBIfam" id="TIGR00493">
    <property type="entry name" value="clpP"/>
    <property type="match status" value="1"/>
</dbReference>
<dbReference type="NCBIfam" id="NF001368">
    <property type="entry name" value="PRK00277.1"/>
    <property type="match status" value="1"/>
</dbReference>
<dbReference type="NCBIfam" id="NF009205">
    <property type="entry name" value="PRK12553.1"/>
    <property type="match status" value="1"/>
</dbReference>
<dbReference type="PANTHER" id="PTHR10381">
    <property type="entry name" value="ATP-DEPENDENT CLP PROTEASE PROTEOLYTIC SUBUNIT"/>
    <property type="match status" value="1"/>
</dbReference>
<dbReference type="PANTHER" id="PTHR10381:SF70">
    <property type="entry name" value="ATP-DEPENDENT CLP PROTEASE PROTEOLYTIC SUBUNIT"/>
    <property type="match status" value="1"/>
</dbReference>
<dbReference type="Pfam" id="PF00574">
    <property type="entry name" value="CLP_protease"/>
    <property type="match status" value="1"/>
</dbReference>
<dbReference type="PRINTS" id="PR00127">
    <property type="entry name" value="CLPPROTEASEP"/>
</dbReference>
<dbReference type="SUPFAM" id="SSF52096">
    <property type="entry name" value="ClpP/crotonase"/>
    <property type="match status" value="1"/>
</dbReference>
<dbReference type="PROSITE" id="PS00382">
    <property type="entry name" value="CLP_PROTEASE_HIS"/>
    <property type="match status" value="1"/>
</dbReference>
<dbReference type="PROSITE" id="PS00381">
    <property type="entry name" value="CLP_PROTEASE_SER"/>
    <property type="match status" value="1"/>
</dbReference>
<reference key="1">
    <citation type="journal article" date="2004" name="Proc. Natl. Acad. Sci. U.S.A.">
        <title>Structural flexibility in the Burkholderia mallei genome.</title>
        <authorList>
            <person name="Nierman W.C."/>
            <person name="DeShazer D."/>
            <person name="Kim H.S."/>
            <person name="Tettelin H."/>
            <person name="Nelson K.E."/>
            <person name="Feldblyum T.V."/>
            <person name="Ulrich R.L."/>
            <person name="Ronning C.M."/>
            <person name="Brinkac L.M."/>
            <person name="Daugherty S.C."/>
            <person name="Davidsen T.D."/>
            <person name="DeBoy R.T."/>
            <person name="Dimitrov G."/>
            <person name="Dodson R.J."/>
            <person name="Durkin A.S."/>
            <person name="Gwinn M.L."/>
            <person name="Haft D.H."/>
            <person name="Khouri H.M."/>
            <person name="Kolonay J.F."/>
            <person name="Madupu R."/>
            <person name="Mohammoud Y."/>
            <person name="Nelson W.C."/>
            <person name="Radune D."/>
            <person name="Romero C.M."/>
            <person name="Sarria S."/>
            <person name="Selengut J."/>
            <person name="Shamblin C."/>
            <person name="Sullivan S.A."/>
            <person name="White O."/>
            <person name="Yu Y."/>
            <person name="Zafar N."/>
            <person name="Zhou L."/>
            <person name="Fraser C.M."/>
        </authorList>
    </citation>
    <scope>NUCLEOTIDE SEQUENCE [LARGE SCALE GENOMIC DNA]</scope>
    <source>
        <strain>ATCC 23344</strain>
    </source>
</reference>
<comment type="function">
    <text evidence="1">Cleaves peptides in various proteins in a process that requires ATP hydrolysis. Has a chymotrypsin-like activity. Plays a major role in the degradation of misfolded proteins.</text>
</comment>
<comment type="catalytic activity">
    <reaction evidence="1">
        <text>Hydrolysis of proteins to small peptides in the presence of ATP and magnesium. alpha-casein is the usual test substrate. In the absence of ATP, only oligopeptides shorter than five residues are hydrolyzed (such as succinyl-Leu-Tyr-|-NHMec, and Leu-Tyr-Leu-|-Tyr-Trp, in which cleavage of the -Tyr-|-Leu- and -Tyr-|-Trp bonds also occurs).</text>
        <dbReference type="EC" id="3.4.21.92"/>
    </reaction>
</comment>
<comment type="subunit">
    <text evidence="1">Fourteen ClpP subunits assemble into 2 heptameric rings which stack back to back to give a disk-like structure with a central cavity, resembling the structure of eukaryotic proteasomes.</text>
</comment>
<comment type="subcellular location">
    <subcellularLocation>
        <location evidence="1">Cytoplasm</location>
    </subcellularLocation>
</comment>
<comment type="similarity">
    <text evidence="1">Belongs to the peptidase S14 family.</text>
</comment>
<evidence type="ECO:0000255" key="1">
    <source>
        <dbReference type="HAMAP-Rule" id="MF_00444"/>
    </source>
</evidence>
<proteinExistence type="inferred from homology"/>
<keyword id="KW-0963">Cytoplasm</keyword>
<keyword id="KW-0378">Hydrolase</keyword>
<keyword id="KW-0645">Protease</keyword>
<keyword id="KW-1185">Reference proteome</keyword>
<keyword id="KW-0720">Serine protease</keyword>
<name>CLPP_BURMA</name>